<comment type="function">
    <text evidence="1">Required for correct translation termination and probably involved in regulation of hypoxic gene expression in association TPA1. Inhibits replication of Brome mosaic virus (By similarity).</text>
</comment>
<comment type="subunit">
    <text evidence="1">Interacts with STM1.</text>
</comment>
<comment type="subcellular location">
    <subcellularLocation>
        <location evidence="1">Nucleus</location>
    </subcellularLocation>
</comment>
<comment type="similarity">
    <text evidence="4">Belongs to the ETT1 family.</text>
</comment>
<reference key="1">
    <citation type="submission" date="2005-03" db="EMBL/GenBank/DDBJ databases">
        <title>Annotation of the Saccharomyces cerevisiae RM11-1a genome.</title>
        <authorList>
            <consortium name="The Broad Institute Genome Sequencing Platform"/>
            <person name="Birren B.W."/>
            <person name="Lander E.S."/>
            <person name="Galagan J.E."/>
            <person name="Nusbaum C."/>
            <person name="Devon K."/>
            <person name="Cuomo C."/>
            <person name="Jaffe D.B."/>
            <person name="Butler J."/>
            <person name="Alvarez P."/>
            <person name="Gnerre S."/>
            <person name="Grabherr M."/>
            <person name="Kleber M."/>
            <person name="Mauceli E.W."/>
            <person name="Brockman W."/>
            <person name="MacCallum I.A."/>
            <person name="Rounsley S."/>
            <person name="Young S.K."/>
            <person name="LaButti K."/>
            <person name="Pushparaj V."/>
            <person name="DeCaprio D."/>
            <person name="Crawford M."/>
            <person name="Koehrsen M."/>
            <person name="Engels R."/>
            <person name="Montgomery P."/>
            <person name="Pearson M."/>
            <person name="Howarth C."/>
            <person name="Larson L."/>
            <person name="Luoma S."/>
            <person name="White J."/>
            <person name="O'Leary S."/>
            <person name="Kodira C.D."/>
            <person name="Zeng Q."/>
            <person name="Yandava C."/>
            <person name="Alvarado L."/>
            <person name="Pratt S."/>
            <person name="Kruglyak L."/>
        </authorList>
    </citation>
    <scope>NUCLEOTIDE SEQUENCE [LARGE SCALE GENOMIC DNA]</scope>
    <source>
        <strain>RM11-1a</strain>
    </source>
</reference>
<feature type="chain" id="PRO_0000406625" description="Enhancer of translation termination 1">
    <location>
        <begin position="1"/>
        <end position="412"/>
    </location>
</feature>
<feature type="region of interest" description="Disordered" evidence="3">
    <location>
        <begin position="1"/>
        <end position="45"/>
    </location>
</feature>
<feature type="compositionally biased region" description="Basic and acidic residues" evidence="3">
    <location>
        <begin position="17"/>
        <end position="31"/>
    </location>
</feature>
<feature type="compositionally biased region" description="Polar residues" evidence="3">
    <location>
        <begin position="32"/>
        <end position="41"/>
    </location>
</feature>
<feature type="modified residue" description="Phosphoserine" evidence="2">
    <location>
        <position position="30"/>
    </location>
</feature>
<accession>B3LJA2</accession>
<proteinExistence type="inferred from homology"/>
<gene>
    <name type="primary">ETT1</name>
    <name type="ORF">SCRG_01452</name>
</gene>
<keyword id="KW-0539">Nucleus</keyword>
<keyword id="KW-0597">Phosphoprotein</keyword>
<keyword id="KW-0804">Transcription</keyword>
<keyword id="KW-0805">Transcription regulation</keyword>
<keyword id="KW-0810">Translation regulation</keyword>
<dbReference type="EMBL" id="CH408045">
    <property type="protein sequence ID" value="EDV10655.1"/>
    <property type="molecule type" value="Genomic_DNA"/>
</dbReference>
<dbReference type="SMR" id="B3LJA2"/>
<dbReference type="HOGENOM" id="CLU_050427_0_0_1"/>
<dbReference type="OrthoDB" id="37847at4893"/>
<dbReference type="Proteomes" id="UP000008335">
    <property type="component" value="Unassembled WGS sequence"/>
</dbReference>
<dbReference type="GO" id="GO:0005634">
    <property type="term" value="C:nucleus"/>
    <property type="evidence" value="ECO:0007669"/>
    <property type="project" value="UniProtKB-SubCell"/>
</dbReference>
<dbReference type="GO" id="GO:2000640">
    <property type="term" value="P:positive regulation of SREBP signaling pathway"/>
    <property type="evidence" value="ECO:0007669"/>
    <property type="project" value="TreeGrafter"/>
</dbReference>
<dbReference type="GO" id="GO:0006417">
    <property type="term" value="P:regulation of translation"/>
    <property type="evidence" value="ECO:0007669"/>
    <property type="project" value="UniProtKB-KW"/>
</dbReference>
<dbReference type="Gene3D" id="1.25.40.10">
    <property type="entry name" value="Tetratricopeptide repeat domain"/>
    <property type="match status" value="1"/>
</dbReference>
<dbReference type="InterPro" id="IPR024318">
    <property type="entry name" value="Nro1/ETT1"/>
</dbReference>
<dbReference type="InterPro" id="IPR011990">
    <property type="entry name" value="TPR-like_helical_dom_sf"/>
</dbReference>
<dbReference type="PANTHER" id="PTHR28290">
    <property type="entry name" value="ENHANCER OF TRANSLATION TERMINATION 1"/>
    <property type="match status" value="1"/>
</dbReference>
<dbReference type="PANTHER" id="PTHR28290:SF1">
    <property type="entry name" value="ENHANCER OF TRANSLATION TERMINATION 1"/>
    <property type="match status" value="1"/>
</dbReference>
<dbReference type="Pfam" id="PF12753">
    <property type="entry name" value="Nro1"/>
    <property type="match status" value="1"/>
</dbReference>
<name>ETT1_YEAS1</name>
<protein>
    <recommendedName>
        <fullName>Enhancer of translation termination 1</fullName>
    </recommendedName>
</protein>
<organism>
    <name type="scientific">Saccharomyces cerevisiae (strain RM11-1a)</name>
    <name type="common">Baker's yeast</name>
    <dbReference type="NCBI Taxonomy" id="285006"/>
    <lineage>
        <taxon>Eukaryota</taxon>
        <taxon>Fungi</taxon>
        <taxon>Dikarya</taxon>
        <taxon>Ascomycota</taxon>
        <taxon>Saccharomycotina</taxon>
        <taxon>Saccharomycetes</taxon>
        <taxon>Saccharomycetales</taxon>
        <taxon>Saccharomycetaceae</taxon>
        <taxon>Saccharomyces</taxon>
    </lineage>
</organism>
<sequence>MAKRPLGLGKQSREKKRKVESVEKKSDEPSRESTPVRSQMSVELDDDADLDDELAQLKGLWSKYFHSDRDDEYVLNGIVHECDRLLRLSEEDKEIKKTLNDIFHGIYALALSELTIFKAGDEEATEEKRKKDVSSFFENAIERVELGLSHFPESQFLKLVLAKIIFQRIPLEYISNLHLKSKDKKLDLVGQLEHGKKHFSIYENDTEFTFEILQMVNDLLDIVENFGREQSIQEGIDSDNEEEEELIDIELEPEHPVYPLQQSLEANYEWLRNHFDKLLDNTNTDMKIYASIANTLGELYLKKAEEPSKVFLSLQYDDGSSKKVSDKEAKNVQETALKHTKKALEYLEKAKLEDDPDTWVQVAEAYIDLGNLLDNESAEQEEAYKTAEEILGKANKASHGKFQDVLDNFLQG</sequence>
<evidence type="ECO:0000250" key="1"/>
<evidence type="ECO:0000250" key="2">
    <source>
        <dbReference type="UniProtKB" id="Q08421"/>
    </source>
</evidence>
<evidence type="ECO:0000256" key="3">
    <source>
        <dbReference type="SAM" id="MobiDB-lite"/>
    </source>
</evidence>
<evidence type="ECO:0000305" key="4"/>